<gene>
    <name evidence="1" type="primary">atpG</name>
    <name type="ordered locus">Mfl114</name>
</gene>
<accession>Q6F203</accession>
<proteinExistence type="inferred from homology"/>
<dbReference type="EMBL" id="AE017263">
    <property type="protein sequence ID" value="AAT75470.1"/>
    <property type="molecule type" value="Genomic_DNA"/>
</dbReference>
<dbReference type="RefSeq" id="WP_011183011.1">
    <property type="nucleotide sequence ID" value="NC_006055.1"/>
</dbReference>
<dbReference type="RefSeq" id="YP_053354.1">
    <property type="nucleotide sequence ID" value="NC_006055.1"/>
</dbReference>
<dbReference type="SMR" id="Q6F203"/>
<dbReference type="STRING" id="265311.Mfl114"/>
<dbReference type="PaxDb" id="265311-Mfl114"/>
<dbReference type="EnsemblBacteria" id="AAT75470">
    <property type="protein sequence ID" value="AAT75470"/>
    <property type="gene ID" value="Mfl114"/>
</dbReference>
<dbReference type="GeneID" id="2897978"/>
<dbReference type="KEGG" id="mfl:Mfl114"/>
<dbReference type="PATRIC" id="fig|265311.5.peg.115"/>
<dbReference type="eggNOG" id="COG0224">
    <property type="taxonomic scope" value="Bacteria"/>
</dbReference>
<dbReference type="HOGENOM" id="CLU_050669_0_1_14"/>
<dbReference type="OrthoDB" id="9812769at2"/>
<dbReference type="Proteomes" id="UP000006647">
    <property type="component" value="Chromosome"/>
</dbReference>
<dbReference type="GO" id="GO:0005886">
    <property type="term" value="C:plasma membrane"/>
    <property type="evidence" value="ECO:0007669"/>
    <property type="project" value="UniProtKB-SubCell"/>
</dbReference>
<dbReference type="GO" id="GO:0045259">
    <property type="term" value="C:proton-transporting ATP synthase complex"/>
    <property type="evidence" value="ECO:0007669"/>
    <property type="project" value="UniProtKB-KW"/>
</dbReference>
<dbReference type="GO" id="GO:0005524">
    <property type="term" value="F:ATP binding"/>
    <property type="evidence" value="ECO:0007669"/>
    <property type="project" value="UniProtKB-UniRule"/>
</dbReference>
<dbReference type="GO" id="GO:0046933">
    <property type="term" value="F:proton-transporting ATP synthase activity, rotational mechanism"/>
    <property type="evidence" value="ECO:0007669"/>
    <property type="project" value="UniProtKB-UniRule"/>
</dbReference>
<dbReference type="GO" id="GO:0042777">
    <property type="term" value="P:proton motive force-driven plasma membrane ATP synthesis"/>
    <property type="evidence" value="ECO:0007669"/>
    <property type="project" value="UniProtKB-UniRule"/>
</dbReference>
<dbReference type="CDD" id="cd12151">
    <property type="entry name" value="F1-ATPase_gamma"/>
    <property type="match status" value="1"/>
</dbReference>
<dbReference type="Gene3D" id="3.40.1380.10">
    <property type="match status" value="1"/>
</dbReference>
<dbReference type="Gene3D" id="1.10.287.80">
    <property type="entry name" value="ATP synthase, gamma subunit, helix hairpin domain"/>
    <property type="match status" value="1"/>
</dbReference>
<dbReference type="HAMAP" id="MF_00815">
    <property type="entry name" value="ATP_synth_gamma_bact"/>
    <property type="match status" value="1"/>
</dbReference>
<dbReference type="InterPro" id="IPR035968">
    <property type="entry name" value="ATP_synth_F1_ATPase_gsu"/>
</dbReference>
<dbReference type="InterPro" id="IPR000131">
    <property type="entry name" value="ATP_synth_F1_gsu"/>
</dbReference>
<dbReference type="InterPro" id="IPR023632">
    <property type="entry name" value="ATP_synth_F1_gsu_CS"/>
</dbReference>
<dbReference type="NCBIfam" id="TIGR01146">
    <property type="entry name" value="ATPsyn_F1gamma"/>
    <property type="match status" value="1"/>
</dbReference>
<dbReference type="PANTHER" id="PTHR11693">
    <property type="entry name" value="ATP SYNTHASE GAMMA CHAIN"/>
    <property type="match status" value="1"/>
</dbReference>
<dbReference type="PANTHER" id="PTHR11693:SF22">
    <property type="entry name" value="ATP SYNTHASE SUBUNIT GAMMA, MITOCHONDRIAL"/>
    <property type="match status" value="1"/>
</dbReference>
<dbReference type="Pfam" id="PF00231">
    <property type="entry name" value="ATP-synt"/>
    <property type="match status" value="1"/>
</dbReference>
<dbReference type="PRINTS" id="PR00126">
    <property type="entry name" value="ATPASEGAMMA"/>
</dbReference>
<dbReference type="SUPFAM" id="SSF52943">
    <property type="entry name" value="ATP synthase (F1-ATPase), gamma subunit"/>
    <property type="match status" value="1"/>
</dbReference>
<dbReference type="PROSITE" id="PS00153">
    <property type="entry name" value="ATPASE_GAMMA"/>
    <property type="match status" value="1"/>
</dbReference>
<sequence>MANLSNLKTQISNTQDIGKITNAMQLVASAKLRRIGKKVTETQEYVSEVYAIFNEIIKHSSESIYLKNSANDIKKTLWVVVNSNLGLCGGYNANVNKLVISNFKKEDQIYAIGSKAVSAYNSKKIKIKNECTDVDIDFSPAQAKQIGNELLSYYSSGEFDEIQIVYTKFINNVTFEPTKLRVFPIIKEETQETSSSYYSFEPSAEEVLNNAVTLYLSTIIFGTIVESQVSEQASRRLAMENATNNGKELEYNLSIQYNRERQASITQEISEIVSGANALMG</sequence>
<feature type="chain" id="PRO_0000073312" description="ATP synthase gamma chain">
    <location>
        <begin position="1"/>
        <end position="281"/>
    </location>
</feature>
<evidence type="ECO:0000255" key="1">
    <source>
        <dbReference type="HAMAP-Rule" id="MF_00815"/>
    </source>
</evidence>
<name>ATPG_MESFL</name>
<keyword id="KW-0066">ATP synthesis</keyword>
<keyword id="KW-1003">Cell membrane</keyword>
<keyword id="KW-0139">CF(1)</keyword>
<keyword id="KW-0375">Hydrogen ion transport</keyword>
<keyword id="KW-0406">Ion transport</keyword>
<keyword id="KW-0472">Membrane</keyword>
<keyword id="KW-1185">Reference proteome</keyword>
<keyword id="KW-0813">Transport</keyword>
<protein>
    <recommendedName>
        <fullName evidence="1">ATP synthase gamma chain</fullName>
    </recommendedName>
    <alternativeName>
        <fullName evidence="1">ATP synthase F1 sector gamma subunit</fullName>
    </alternativeName>
    <alternativeName>
        <fullName evidence="1">F-ATPase gamma subunit</fullName>
    </alternativeName>
</protein>
<comment type="function">
    <text evidence="1">Produces ATP from ADP in the presence of a proton gradient across the membrane. The gamma chain is believed to be important in regulating ATPase activity and the flow of protons through the CF(0) complex.</text>
</comment>
<comment type="subunit">
    <text evidence="1">F-type ATPases have 2 components, CF(1) - the catalytic core - and CF(0) - the membrane proton channel. CF(1) has five subunits: alpha(3), beta(3), gamma(1), delta(1), epsilon(1). CF(0) has three main subunits: a, b and c.</text>
</comment>
<comment type="subcellular location">
    <subcellularLocation>
        <location evidence="1">Cell membrane</location>
        <topology evidence="1">Peripheral membrane protein</topology>
    </subcellularLocation>
</comment>
<comment type="similarity">
    <text evidence="1">Belongs to the ATPase gamma chain family.</text>
</comment>
<reference key="1">
    <citation type="submission" date="2004-06" db="EMBL/GenBank/DDBJ databases">
        <authorList>
            <person name="Birren B.W."/>
            <person name="Stange-Thomann N."/>
            <person name="Hafez N."/>
            <person name="DeCaprio D."/>
            <person name="Fisher S."/>
            <person name="Butler J."/>
            <person name="Elkins T."/>
            <person name="Kodira C.D."/>
            <person name="Major J."/>
            <person name="Wang S."/>
            <person name="Nicol R."/>
            <person name="Nusbaum C."/>
        </authorList>
    </citation>
    <scope>NUCLEOTIDE SEQUENCE [LARGE SCALE GENOMIC DNA]</scope>
    <source>
        <strain>ATCC 33453 / NBRC 100688 / NCTC 11704 / L1</strain>
    </source>
</reference>
<organism>
    <name type="scientific">Mesoplasma florum (strain ATCC 33453 / NBRC 100688 / NCTC 11704 / L1)</name>
    <name type="common">Acholeplasma florum</name>
    <dbReference type="NCBI Taxonomy" id="265311"/>
    <lineage>
        <taxon>Bacteria</taxon>
        <taxon>Bacillati</taxon>
        <taxon>Mycoplasmatota</taxon>
        <taxon>Mollicutes</taxon>
        <taxon>Entomoplasmatales</taxon>
        <taxon>Entomoplasmataceae</taxon>
        <taxon>Mesoplasma</taxon>
    </lineage>
</organism>